<accession>P07832</accession>
<accession>Q84077</accession>
<organismHost>
    <name type="scientific">Homo sapiens</name>
    <name type="common">Human</name>
    <dbReference type="NCBI Taxonomy" id="9606"/>
</organismHost>
<organism>
    <name type="scientific">Influenza B virus (strain B/Lee/1940)</name>
    <dbReference type="NCBI Taxonomy" id="518987"/>
    <lineage>
        <taxon>Viruses</taxon>
        <taxon>Riboviria</taxon>
        <taxon>Orthornavirae</taxon>
        <taxon>Negarnaviricota</taxon>
        <taxon>Polyploviricotina</taxon>
        <taxon>Insthoviricetes</taxon>
        <taxon>Articulavirales</taxon>
        <taxon>Orthomyxoviridae</taxon>
        <taxon>Betainfluenzavirus</taxon>
        <taxon>Betainfluenzavirus influenzae</taxon>
        <taxon>Influenza B virus</taxon>
    </lineage>
</organism>
<protein>
    <recommendedName>
        <fullName evidence="1">RNA-directed RNA polymerase catalytic subunit</fullName>
        <ecNumber evidence="1">2.7.7.48</ecNumber>
    </recommendedName>
    <alternativeName>
        <fullName evidence="1">Polymerase basic protein 1</fullName>
        <shortName evidence="1">PB1</shortName>
    </alternativeName>
    <alternativeName>
        <fullName evidence="1">RNA-directed RNA polymerase subunit P1</fullName>
    </alternativeName>
</protein>
<dbReference type="EC" id="2.7.7.48" evidence="1"/>
<dbReference type="EMBL" id="M14880">
    <property type="protein sequence ID" value="AAA43767.1"/>
    <property type="molecule type" value="Genomic_RNA"/>
</dbReference>
<dbReference type="EMBL" id="D00004">
    <property type="protein sequence ID" value="BAA00002.1"/>
    <property type="molecule type" value="mRNA"/>
</dbReference>
<dbReference type="PIR" id="A24287">
    <property type="entry name" value="P1IVBL"/>
</dbReference>
<dbReference type="RefSeq" id="NP_056657.1">
    <property type="nucleotide sequence ID" value="NC_002204.1"/>
</dbReference>
<dbReference type="SMR" id="P07832"/>
<dbReference type="DNASU" id="956545"/>
<dbReference type="GeneID" id="956545"/>
<dbReference type="KEGG" id="vg:956545"/>
<dbReference type="OrthoDB" id="2346at10239"/>
<dbReference type="Proteomes" id="UP000008158">
    <property type="component" value="Genome"/>
</dbReference>
<dbReference type="GO" id="GO:0030430">
    <property type="term" value="C:host cell cytoplasm"/>
    <property type="evidence" value="ECO:0007669"/>
    <property type="project" value="UniProtKB-SubCell"/>
</dbReference>
<dbReference type="GO" id="GO:0042025">
    <property type="term" value="C:host cell nucleus"/>
    <property type="evidence" value="ECO:0007669"/>
    <property type="project" value="UniProtKB-SubCell"/>
</dbReference>
<dbReference type="GO" id="GO:0000166">
    <property type="term" value="F:nucleotide binding"/>
    <property type="evidence" value="ECO:0007669"/>
    <property type="project" value="UniProtKB-UniRule"/>
</dbReference>
<dbReference type="GO" id="GO:0003723">
    <property type="term" value="F:RNA binding"/>
    <property type="evidence" value="ECO:0007669"/>
    <property type="project" value="InterPro"/>
</dbReference>
<dbReference type="GO" id="GO:0003968">
    <property type="term" value="F:RNA-directed RNA polymerase activity"/>
    <property type="evidence" value="ECO:0007669"/>
    <property type="project" value="UniProtKB-UniRule"/>
</dbReference>
<dbReference type="GO" id="GO:0006351">
    <property type="term" value="P:DNA-templated transcription"/>
    <property type="evidence" value="ECO:0007669"/>
    <property type="project" value="UniProtKB-UniRule"/>
</dbReference>
<dbReference type="GO" id="GO:0039657">
    <property type="term" value="P:symbiont-mediated suppression of host gene expression"/>
    <property type="evidence" value="ECO:0007669"/>
    <property type="project" value="UniProtKB-KW"/>
</dbReference>
<dbReference type="GO" id="GO:0039523">
    <property type="term" value="P:symbiont-mediated suppression of host mRNA transcription via inhibition of RNA polymerase II activity"/>
    <property type="evidence" value="ECO:0007669"/>
    <property type="project" value="UniProtKB-UniRule"/>
</dbReference>
<dbReference type="GO" id="GO:0039694">
    <property type="term" value="P:viral RNA genome replication"/>
    <property type="evidence" value="ECO:0007669"/>
    <property type="project" value="UniProtKB-UniRule"/>
</dbReference>
<dbReference type="GO" id="GO:0019083">
    <property type="term" value="P:viral transcription"/>
    <property type="evidence" value="ECO:0007669"/>
    <property type="project" value="UniProtKB-KW"/>
</dbReference>
<dbReference type="Gene3D" id="6.10.140.720">
    <property type="match status" value="1"/>
</dbReference>
<dbReference type="HAMAP" id="MF_04065">
    <property type="entry name" value="INFV_RDRP"/>
    <property type="match status" value="1"/>
</dbReference>
<dbReference type="InterPro" id="IPR007099">
    <property type="entry name" value="RNA-dir_pol_NSvirus"/>
</dbReference>
<dbReference type="InterPro" id="IPR001407">
    <property type="entry name" value="RNA_pol_PB1_influenza"/>
</dbReference>
<dbReference type="Pfam" id="PF00602">
    <property type="entry name" value="Flu_PB1"/>
    <property type="match status" value="1"/>
</dbReference>
<dbReference type="PIRSF" id="PIRSF000827">
    <property type="entry name" value="RdRPol_OMV"/>
    <property type="match status" value="1"/>
</dbReference>
<dbReference type="PROSITE" id="PS50525">
    <property type="entry name" value="RDRP_SSRNA_NEG_SEG"/>
    <property type="match status" value="1"/>
</dbReference>
<sequence>MNINPYFLFIDVPIQAAISTTFPYTGVPPYSHGTGTGYTIDTVIRTHEYSNKGKQYISDVTGCVMVDPTNGPLPEDNEPSAYAQLDCVLEALDRMDEEHPGLFQAGSQNAMEALMVTTVDKLTQGRQTFDWTVCRNQPAATALNTTITSFRLNDLNGADKGGLVPFCQDIIDSLDKPEMIFFTVKNIKKKLPAKNRKGFLIKRIPMKVKDRITRVEYIKRALSLNTMTKDAERGKLKRRAIATAGIQIRGFVLVVENLAKNICENLEQSGLPVGGNEKKAKLSNAVAKMLSNCPPGGISMTVTGDNTKWNECLNPRIFLAMTERITRDSPIWFRDFCSIAPVLFSNKIARLGKGFMITSKTKRLKAQIPCPDLFNIPLERYNEETRAKLKKLKPFFNEEGTASLSPGMMMGMFNMLSTVLGVAALGIKNIGNKEYLWDGLQSSDDFALFVNAKDEETCMEGINDFYRTCKLLGINMSKKKSYCNETGMFEFTSMFYRDGFVSNFAMELPSFGVAGVNESADMAIGMTIIKNNMINNGMGPATAQTAIQLFIADYRYTYKCHRGDSKVEGKRMKIIKELWENTKGRDGLLVADGGPNLYNLRNLHIPEIILKYNIMDPEYKGRLLHPQNPFVGHLSIEGIKEADITPAHGPIKKMDYDAVSGTHSWRTKRNRSILNTDQRNMILEEQCYAKCCNLFEACFNSASYRKPVGQHSMLEAMAHRLRMDARLDYESGRMSKEDFEKAMAHLGEIGYM</sequence>
<proteinExistence type="evidence at transcript level"/>
<comment type="function">
    <text evidence="1">RNA-dependent RNA polymerase which is responsible for replication and transcription of virus RNA segments. The transcription of viral mRNAs occurs by a unique mechanism called cap-snatching. 5' methylated caps of cellular mRNAs are cleaved after 10-13 nucleotides by PA. In turn, these short capped RNAs are used as primers by PB1 for transcription of viral mRNAs. During virus replication, PB1 initiates RNA synthesis and copy vRNA into complementary RNA (cRNA) which in turn serves as a template for the production of more vRNAs.</text>
</comment>
<comment type="catalytic activity">
    <reaction evidence="1">
        <text>RNA(n) + a ribonucleoside 5'-triphosphate = RNA(n+1) + diphosphate</text>
        <dbReference type="Rhea" id="RHEA:21248"/>
        <dbReference type="Rhea" id="RHEA-COMP:14527"/>
        <dbReference type="Rhea" id="RHEA-COMP:17342"/>
        <dbReference type="ChEBI" id="CHEBI:33019"/>
        <dbReference type="ChEBI" id="CHEBI:61557"/>
        <dbReference type="ChEBI" id="CHEBI:140395"/>
        <dbReference type="EC" id="2.7.7.48"/>
    </reaction>
</comment>
<comment type="subunit">
    <text evidence="1">Influenza RNA polymerase is composed of three subunits: PB1, PB2 and PA. Interacts (via N-terminus) with PA (via C-terminus). Interacts (via C-terminus) with PB2 (via N-terminus); this interaction is essential for transcription initiation.</text>
</comment>
<comment type="subcellular location">
    <subcellularLocation>
        <location evidence="1">Host nucleus</location>
    </subcellularLocation>
    <subcellularLocation>
        <location evidence="1">Host cytoplasm</location>
    </subcellularLocation>
</comment>
<comment type="PTM">
    <text evidence="1">Phosphorylated by host PRKCA.</text>
</comment>
<comment type="similarity">
    <text evidence="1">Belongs to the influenza viruses polymerase PB1 family.</text>
</comment>
<keyword id="KW-1262">Eukaryotic host gene expression shutoff by virus</keyword>
<keyword id="KW-1191">Eukaryotic host transcription shutoff by virus</keyword>
<keyword id="KW-1035">Host cytoplasm</keyword>
<keyword id="KW-1190">Host gene expression shutoff by virus</keyword>
<keyword id="KW-1048">Host nucleus</keyword>
<keyword id="KW-0945">Host-virus interaction</keyword>
<keyword id="KW-1104">Inhibition of host RNA polymerase II by virus</keyword>
<keyword id="KW-0547">Nucleotide-binding</keyword>
<keyword id="KW-0548">Nucleotidyltransferase</keyword>
<keyword id="KW-0597">Phosphoprotein</keyword>
<keyword id="KW-1185">Reference proteome</keyword>
<keyword id="KW-0696">RNA-directed RNA polymerase</keyword>
<keyword id="KW-0808">Transferase</keyword>
<keyword id="KW-0693">Viral RNA replication</keyword>
<keyword id="KW-1195">Viral transcription</keyword>
<reference key="1">
    <citation type="journal article" date="1986" name="Virology">
        <title>Influenza B virus PB1 protein; nucleotide sequence of the genome RNA segment predicts a high degree of structural homology with the corresponding influenza A virus polymerase protein.</title>
        <authorList>
            <person name="Kemdirim S."/>
            <person name="Palefsky J."/>
            <person name="Briedis D.J."/>
        </authorList>
    </citation>
    <scope>NUCLEOTIDE SEQUENCE</scope>
</reference>
<reference key="2">
    <citation type="submission" date="1988-04" db="EMBL/GenBank/DDBJ databases">
        <authorList>
            <person name="Briedis D.J."/>
        </authorList>
    </citation>
    <scope>SEQUENCE REVISION</scope>
</reference>
<name>RDRP_INBLE</name>
<evidence type="ECO:0000255" key="1">
    <source>
        <dbReference type="HAMAP-Rule" id="MF_04065"/>
    </source>
</evidence>
<gene>
    <name evidence="1" type="primary">PB1</name>
</gene>
<feature type="chain" id="PRO_0000078774" description="RNA-directed RNA polymerase catalytic subunit">
    <location>
        <begin position="1"/>
        <end position="752"/>
    </location>
</feature>
<feature type="domain" description="RdRp catalytic" evidence="1">
    <location>
        <begin position="286"/>
        <end position="482"/>
    </location>
</feature>
<feature type="region of interest" description="Promoter-binding site" evidence="1">
    <location>
        <begin position="249"/>
        <end position="256"/>
    </location>
</feature>
<feature type="short sequence motif" description="Nuclear localization signal" evidence="1">
    <location>
        <begin position="187"/>
        <end position="195"/>
    </location>
</feature>
<feature type="short sequence motif" description="Nuclear localization signal" evidence="1">
    <location>
        <begin position="203"/>
        <end position="216"/>
    </location>
</feature>
<feature type="sequence conflict" description="In Ref. 2; BAA00002." ref="2">
    <original>R</original>
    <variation>S</variation>
    <location>
        <position position="363"/>
    </location>
</feature>